<accession>P36151</accession>
<accession>D6VXD1</accession>
<comment type="subcellular location">
    <subcellularLocation>
        <location evidence="2">Mitochondrion</location>
    </subcellularLocation>
</comment>
<comment type="miscellaneous">
    <text evidence="1">Present with 3870 molecules/cell in log phase SD medium.</text>
</comment>
<comment type="similarity">
    <text evidence="3">Belongs to the HAD-like hydrolase superfamily.</text>
</comment>
<keyword id="KW-0002">3D-structure</keyword>
<keyword id="KW-0378">Hydrolase</keyword>
<keyword id="KW-0496">Mitochondrion</keyword>
<keyword id="KW-1185">Reference proteome</keyword>
<reference key="1">
    <citation type="journal article" date="1994" name="Nature">
        <title>Complete DNA sequence of yeast chromosome XI.</title>
        <authorList>
            <person name="Dujon B."/>
            <person name="Alexandraki D."/>
            <person name="Andre B."/>
            <person name="Ansorge W."/>
            <person name="Baladron V."/>
            <person name="Ballesta J.P.G."/>
            <person name="Banrevi A."/>
            <person name="Bolle P.-A."/>
            <person name="Bolotin-Fukuhara M."/>
            <person name="Bossier P."/>
            <person name="Bou G."/>
            <person name="Boyer J."/>
            <person name="Buitrago M.J."/>
            <person name="Cheret G."/>
            <person name="Colleaux L."/>
            <person name="Daignan-Fornier B."/>
            <person name="del Rey F."/>
            <person name="Dion C."/>
            <person name="Domdey H."/>
            <person name="Duesterhoeft A."/>
            <person name="Duesterhus S."/>
            <person name="Entian K.-D."/>
            <person name="Erfle H."/>
            <person name="Esteban P.F."/>
            <person name="Feldmann H."/>
            <person name="Fernandes L."/>
            <person name="Fobo G.M."/>
            <person name="Fritz C."/>
            <person name="Fukuhara H."/>
            <person name="Gabel C."/>
            <person name="Gaillon L."/>
            <person name="Garcia-Cantalejo J.M."/>
            <person name="Garcia-Ramirez J.J."/>
            <person name="Gent M.E."/>
            <person name="Ghazvini M."/>
            <person name="Goffeau A."/>
            <person name="Gonzalez A."/>
            <person name="Grothues D."/>
            <person name="Guerreiro P."/>
            <person name="Hegemann J.H."/>
            <person name="Hewitt N."/>
            <person name="Hilger F."/>
            <person name="Hollenberg C.P."/>
            <person name="Horaitis O."/>
            <person name="Indge K.J."/>
            <person name="Jacquier A."/>
            <person name="James C.M."/>
            <person name="Jauniaux J.-C."/>
            <person name="Jimenez A."/>
            <person name="Keuchel H."/>
            <person name="Kirchrath L."/>
            <person name="Kleine K."/>
            <person name="Koetter P."/>
            <person name="Legrain P."/>
            <person name="Liebl S."/>
            <person name="Louis E.J."/>
            <person name="Maia e Silva A."/>
            <person name="Marck C."/>
            <person name="Monnier A.-L."/>
            <person name="Moestl D."/>
            <person name="Mueller S."/>
            <person name="Obermaier B."/>
            <person name="Oliver S.G."/>
            <person name="Pallier C."/>
            <person name="Pascolo S."/>
            <person name="Pfeiffer F."/>
            <person name="Philippsen P."/>
            <person name="Planta R.J."/>
            <person name="Pohl F.M."/>
            <person name="Pohl T.M."/>
            <person name="Poehlmann R."/>
            <person name="Portetelle D."/>
            <person name="Purnelle B."/>
            <person name="Puzos V."/>
            <person name="Ramezani Rad M."/>
            <person name="Rasmussen S.W."/>
            <person name="Remacha M.A."/>
            <person name="Revuelta J.L."/>
            <person name="Richard G.-F."/>
            <person name="Rieger M."/>
            <person name="Rodrigues-Pousada C."/>
            <person name="Rose M."/>
            <person name="Rupp T."/>
            <person name="Santos M.A."/>
            <person name="Schwager C."/>
            <person name="Sensen C."/>
            <person name="Skala J."/>
            <person name="Soares H."/>
            <person name="Sor F."/>
            <person name="Stegemann J."/>
            <person name="Tettelin H."/>
            <person name="Thierry A."/>
            <person name="Tzermia M."/>
            <person name="Urrestarazu L.A."/>
            <person name="van Dyck L."/>
            <person name="van Vliet-Reedijk J.C."/>
            <person name="Valens M."/>
            <person name="Vandenbol M."/>
            <person name="Vilela C."/>
            <person name="Vissers S."/>
            <person name="von Wettstein D."/>
            <person name="Voss H."/>
            <person name="Wiemann S."/>
            <person name="Xu G."/>
            <person name="Zimmermann J."/>
            <person name="Haasemann M."/>
            <person name="Becker I."/>
            <person name="Mewes H.-W."/>
        </authorList>
    </citation>
    <scope>NUCLEOTIDE SEQUENCE [LARGE SCALE GENOMIC DNA]</scope>
    <source>
        <strain>ATCC 204508 / S288c</strain>
    </source>
</reference>
<reference key="2">
    <citation type="journal article" date="2014" name="G3 (Bethesda)">
        <title>The reference genome sequence of Saccharomyces cerevisiae: Then and now.</title>
        <authorList>
            <person name="Engel S.R."/>
            <person name="Dietrich F.S."/>
            <person name="Fisk D.G."/>
            <person name="Binkley G."/>
            <person name="Balakrishnan R."/>
            <person name="Costanzo M.C."/>
            <person name="Dwight S.S."/>
            <person name="Hitz B.C."/>
            <person name="Karra K."/>
            <person name="Nash R.S."/>
            <person name="Weng S."/>
            <person name="Wong E.D."/>
            <person name="Lloyd P."/>
            <person name="Skrzypek M.S."/>
            <person name="Miyasato S.R."/>
            <person name="Simison M."/>
            <person name="Cherry J.M."/>
        </authorList>
    </citation>
    <scope>GENOME REANNOTATION</scope>
    <source>
        <strain>ATCC 204508 / S288c</strain>
    </source>
</reference>
<reference key="3">
    <citation type="journal article" date="2003" name="Nature">
        <title>Global analysis of protein expression in yeast.</title>
        <authorList>
            <person name="Ghaemmaghami S."/>
            <person name="Huh W.-K."/>
            <person name="Bower K."/>
            <person name="Howson R.W."/>
            <person name="Belle A."/>
            <person name="Dephoure N."/>
            <person name="O'Shea E.K."/>
            <person name="Weissman J.S."/>
        </authorList>
    </citation>
    <scope>LEVEL OF PROTEIN EXPRESSION [LARGE SCALE ANALYSIS]</scope>
</reference>
<reference key="4">
    <citation type="journal article" date="2006" name="J. Proteome Res.">
        <title>Toward the complete yeast mitochondrial proteome: multidimensional separation techniques for mitochondrial proteomics.</title>
        <authorList>
            <person name="Reinders J."/>
            <person name="Zahedi R.P."/>
            <person name="Pfanner N."/>
            <person name="Meisinger C."/>
            <person name="Sickmann A."/>
        </authorList>
    </citation>
    <scope>SUBCELLULAR LOCATION [LARGE SCALE ANALYSIS]</scope>
    <scope>IDENTIFICATION BY MASS SPECTROMETRY</scope>
</reference>
<organism>
    <name type="scientific">Saccharomyces cerevisiae (strain ATCC 204508 / S288c)</name>
    <name type="common">Baker's yeast</name>
    <dbReference type="NCBI Taxonomy" id="559292"/>
    <lineage>
        <taxon>Eukaryota</taxon>
        <taxon>Fungi</taxon>
        <taxon>Dikarya</taxon>
        <taxon>Ascomycota</taxon>
        <taxon>Saccharomycotina</taxon>
        <taxon>Saccharomycetes</taxon>
        <taxon>Saccharomycetales</taxon>
        <taxon>Saccharomycetaceae</taxon>
        <taxon>Saccharomyces</taxon>
    </lineage>
</organism>
<dbReference type="EC" id="3.-.-.-" evidence="3"/>
<dbReference type="EMBL" id="Z28295">
    <property type="protein sequence ID" value="CAA82149.1"/>
    <property type="molecule type" value="Genomic_DNA"/>
</dbReference>
<dbReference type="EMBL" id="BK006944">
    <property type="protein sequence ID" value="DAA09221.1"/>
    <property type="molecule type" value="Genomic_DNA"/>
</dbReference>
<dbReference type="PIR" id="S38147">
    <property type="entry name" value="S38147"/>
</dbReference>
<dbReference type="RefSeq" id="NP_012996.1">
    <property type="nucleotide sequence ID" value="NM_001179860.1"/>
</dbReference>
<dbReference type="PDB" id="3KC2">
    <property type="method" value="X-ray"/>
    <property type="resolution" value="1.55 A"/>
    <property type="chains" value="A/B=1-352"/>
</dbReference>
<dbReference type="PDB" id="3RF6">
    <property type="method" value="X-ray"/>
    <property type="resolution" value="1.70 A"/>
    <property type="chains" value="A/B=1-352"/>
</dbReference>
<dbReference type="PDBsum" id="3KC2"/>
<dbReference type="PDBsum" id="3RF6"/>
<dbReference type="SMR" id="P36151"/>
<dbReference type="BioGRID" id="34201">
    <property type="interactions" value="40"/>
</dbReference>
<dbReference type="DIP" id="DIP-4076N"/>
<dbReference type="FunCoup" id="P36151">
    <property type="interactions" value="298"/>
</dbReference>
<dbReference type="MINT" id="P36151"/>
<dbReference type="STRING" id="4932.YKR070W"/>
<dbReference type="iPTMnet" id="P36151"/>
<dbReference type="PaxDb" id="4932-YKR070W"/>
<dbReference type="PeptideAtlas" id="P36151"/>
<dbReference type="EnsemblFungi" id="YKR070W_mRNA">
    <property type="protein sequence ID" value="YKR070W"/>
    <property type="gene ID" value="YKR070W"/>
</dbReference>
<dbReference type="GeneID" id="853944"/>
<dbReference type="KEGG" id="sce:YKR070W"/>
<dbReference type="AGR" id="SGD:S000001778"/>
<dbReference type="SGD" id="S000001778">
    <property type="gene designation" value="YKR070W"/>
</dbReference>
<dbReference type="VEuPathDB" id="FungiDB:YKR070W"/>
<dbReference type="eggNOG" id="KOG1618">
    <property type="taxonomic scope" value="Eukaryota"/>
</dbReference>
<dbReference type="GeneTree" id="ENSGT00940000175279"/>
<dbReference type="HOGENOM" id="CLU_030880_1_0_1"/>
<dbReference type="InParanoid" id="P36151"/>
<dbReference type="OMA" id="WPFHDLT"/>
<dbReference type="OrthoDB" id="10251048at2759"/>
<dbReference type="BioCyc" id="YEAST:G3O-32036-MONOMER"/>
<dbReference type="BioGRID-ORCS" id="853944">
    <property type="hits" value="1 hit in 10 CRISPR screens"/>
</dbReference>
<dbReference type="EvolutionaryTrace" id="P36151"/>
<dbReference type="PRO" id="PR:P36151"/>
<dbReference type="Proteomes" id="UP000002311">
    <property type="component" value="Chromosome XI"/>
</dbReference>
<dbReference type="RNAct" id="P36151">
    <property type="molecule type" value="protein"/>
</dbReference>
<dbReference type="GO" id="GO:0005739">
    <property type="term" value="C:mitochondrion"/>
    <property type="evidence" value="ECO:0007005"/>
    <property type="project" value="SGD"/>
</dbReference>
<dbReference type="GO" id="GO:0016787">
    <property type="term" value="F:hydrolase activity"/>
    <property type="evidence" value="ECO:0007669"/>
    <property type="project" value="UniProtKB-KW"/>
</dbReference>
<dbReference type="GO" id="GO:0046474">
    <property type="term" value="P:glycerophospholipid biosynthetic process"/>
    <property type="evidence" value="ECO:0000318"/>
    <property type="project" value="GO_Central"/>
</dbReference>
<dbReference type="CDD" id="cd07511">
    <property type="entry name" value="HAD_like"/>
    <property type="match status" value="1"/>
</dbReference>
<dbReference type="FunFam" id="3.40.50.1000:FF:000178">
    <property type="entry name" value="Predicted phosphatase"/>
    <property type="match status" value="1"/>
</dbReference>
<dbReference type="Gene3D" id="3.40.50.1000">
    <property type="entry name" value="HAD superfamily/HAD-like"/>
    <property type="match status" value="2"/>
</dbReference>
<dbReference type="InterPro" id="IPR050324">
    <property type="entry name" value="CDP-alcohol_PTase-I"/>
</dbReference>
<dbReference type="InterPro" id="IPR036412">
    <property type="entry name" value="HAD-like_sf"/>
</dbReference>
<dbReference type="InterPro" id="IPR006357">
    <property type="entry name" value="HAD-SF_hydro_IIA"/>
</dbReference>
<dbReference type="InterPro" id="IPR006353">
    <property type="entry name" value="HAD-SF_hydro_IIA_CECR5"/>
</dbReference>
<dbReference type="InterPro" id="IPR023214">
    <property type="entry name" value="HAD_sf"/>
</dbReference>
<dbReference type="NCBIfam" id="TIGR01456">
    <property type="entry name" value="CECR5"/>
    <property type="match status" value="1"/>
</dbReference>
<dbReference type="NCBIfam" id="TIGR01460">
    <property type="entry name" value="HAD-SF-IIA"/>
    <property type="match status" value="1"/>
</dbReference>
<dbReference type="PANTHER" id="PTHR14269">
    <property type="entry name" value="CDP-DIACYLGLYCEROL--GLYCEROL-3-PHOSPHATE 3-PHOSPHATIDYLTRANSFERASE-RELATED"/>
    <property type="match status" value="1"/>
</dbReference>
<dbReference type="PANTHER" id="PTHR14269:SF57">
    <property type="entry name" value="SUPERFAMILY HYDROLASE, PUTATIVE (AFU_ORTHOLOGUE AFUA_2G02580)-RELATED"/>
    <property type="match status" value="1"/>
</dbReference>
<dbReference type="Pfam" id="PF13344">
    <property type="entry name" value="Hydrolase_6"/>
    <property type="match status" value="1"/>
</dbReference>
<dbReference type="Pfam" id="PF13242">
    <property type="entry name" value="Hydrolase_like"/>
    <property type="match status" value="1"/>
</dbReference>
<dbReference type="SFLD" id="SFLDG01139">
    <property type="entry name" value="C2.A:_Pyridoxal_Phosphate_Phos"/>
    <property type="match status" value="1"/>
</dbReference>
<dbReference type="SFLD" id="SFLDS00003">
    <property type="entry name" value="Haloacid_Dehalogenase"/>
    <property type="match status" value="1"/>
</dbReference>
<dbReference type="SUPFAM" id="SSF56784">
    <property type="entry name" value="HAD-like"/>
    <property type="match status" value="1"/>
</dbReference>
<gene>
    <name type="ordered locus">YKR070W</name>
</gene>
<feature type="chain" id="PRO_0000203218" description="Mitochondrial hydrolase YKR070W">
    <location>
        <begin position="1"/>
        <end position="352"/>
    </location>
</feature>
<feature type="strand" evidence="4">
    <location>
        <begin position="14"/>
        <end position="18"/>
    </location>
</feature>
<feature type="turn" evidence="4">
    <location>
        <begin position="21"/>
        <end position="23"/>
    </location>
</feature>
<feature type="strand" evidence="4">
    <location>
        <begin position="24"/>
        <end position="26"/>
    </location>
</feature>
<feature type="helix" evidence="4">
    <location>
        <begin position="34"/>
        <end position="43"/>
    </location>
</feature>
<feature type="strand" evidence="4">
    <location>
        <begin position="48"/>
        <end position="51"/>
    </location>
</feature>
<feature type="helix" evidence="4">
    <location>
        <begin position="59"/>
        <end position="70"/>
    </location>
</feature>
<feature type="helix" evidence="4">
    <location>
        <begin position="76"/>
        <end position="78"/>
    </location>
</feature>
<feature type="helix" evidence="4">
    <location>
        <begin position="84"/>
        <end position="89"/>
    </location>
</feature>
<feature type="turn" evidence="4">
    <location>
        <begin position="90"/>
        <end position="92"/>
    </location>
</feature>
<feature type="strand" evidence="4">
    <location>
        <begin position="94"/>
        <end position="101"/>
    </location>
</feature>
<feature type="helix" evidence="4">
    <location>
        <begin position="104"/>
        <end position="111"/>
    </location>
</feature>
<feature type="strand" evidence="4">
    <location>
        <begin position="114"/>
        <end position="118"/>
    </location>
</feature>
<feature type="helix" evidence="4">
    <location>
        <begin position="119"/>
        <end position="125"/>
    </location>
</feature>
<feature type="helix" evidence="4">
    <location>
        <begin position="127"/>
        <end position="129"/>
    </location>
</feature>
<feature type="helix" evidence="4">
    <location>
        <begin position="137"/>
        <end position="143"/>
    </location>
</feature>
<feature type="turn" evidence="4">
    <location>
        <begin position="148"/>
        <end position="152"/>
    </location>
</feature>
<feature type="strand" evidence="4">
    <location>
        <begin position="157"/>
        <end position="160"/>
    </location>
</feature>
<feature type="helix" evidence="4">
    <location>
        <begin position="167"/>
        <end position="178"/>
    </location>
</feature>
<feature type="strand" evidence="4">
    <location>
        <begin position="200"/>
        <end position="203"/>
    </location>
</feature>
<feature type="strand" evidence="4">
    <location>
        <begin position="207"/>
        <end position="209"/>
    </location>
</feature>
<feature type="strand" evidence="4">
    <location>
        <begin position="212"/>
        <end position="215"/>
    </location>
</feature>
<feature type="helix" evidence="4">
    <location>
        <begin position="220"/>
        <end position="235"/>
    </location>
</feature>
<feature type="helix" evidence="4">
    <location>
        <begin position="249"/>
        <end position="267"/>
    </location>
</feature>
<feature type="strand" evidence="5">
    <location>
        <begin position="268"/>
        <end position="270"/>
    </location>
</feature>
<feature type="turn" evidence="4">
    <location>
        <begin position="285"/>
        <end position="289"/>
    </location>
</feature>
<feature type="strand" evidence="4">
    <location>
        <begin position="290"/>
        <end position="298"/>
    </location>
</feature>
<feature type="turn" evidence="4">
    <location>
        <begin position="300"/>
        <end position="302"/>
    </location>
</feature>
<feature type="helix" evidence="4">
    <location>
        <begin position="303"/>
        <end position="310"/>
    </location>
</feature>
<feature type="strand" evidence="4">
    <location>
        <begin position="313"/>
        <end position="316"/>
    </location>
</feature>
<feature type="strand" evidence="4">
    <location>
        <begin position="318"/>
        <end position="321"/>
    </location>
</feature>
<feature type="strand" evidence="4">
    <location>
        <begin position="334"/>
        <end position="336"/>
    </location>
</feature>
<feature type="helix" evidence="4">
    <location>
        <begin position="340"/>
        <end position="351"/>
    </location>
</feature>
<sequence length="352" mass="39406">MIGKRFFQTTSKKIAFAFDIDGVLFRGKKPIAGASDALKLLNRNKIPYILLTNGGGFSERARTEFISSKLDVDVSPLQIIQSHTPYKSLVNKYSRILAVGTPSVRGVAEGYGFQDVVHQTDIVRYNRDIAPFSGLSDEQVMEYSRDIPDLTTKKFDAVLVFNDPHDWAADIQIISDAINSENGMLNTLRNEKSGKPSIPIYFSNQDLLWANPYKLNRFGQGAFRLLVRRLYLELNGEPLQDYTLGKPTKLTYDFAHHVLIDWEKRLSGKIGQSVKQKLPLLGTKPSTSPFHAVFMVGDNPASDIIGAQNYGWNSCLVKTGVYNEGDDLKECKPTLIVNDVFDAVTKTLEKYA</sequence>
<protein>
    <recommendedName>
        <fullName>Mitochondrial hydrolase YKR070W</fullName>
        <ecNumber evidence="3">3.-.-.-</ecNumber>
    </recommendedName>
</protein>
<name>YK50_YEAST</name>
<proteinExistence type="evidence at protein level"/>
<evidence type="ECO:0000269" key="1">
    <source>
    </source>
</evidence>
<evidence type="ECO:0000269" key="2">
    <source>
    </source>
</evidence>
<evidence type="ECO:0000305" key="3"/>
<evidence type="ECO:0007829" key="4">
    <source>
        <dbReference type="PDB" id="3KC2"/>
    </source>
</evidence>
<evidence type="ECO:0007829" key="5">
    <source>
        <dbReference type="PDB" id="3RF6"/>
    </source>
</evidence>